<protein>
    <recommendedName>
        <fullName evidence="1">Porphobilinogen deaminase</fullName>
        <shortName evidence="1">PBG</shortName>
        <ecNumber evidence="1">2.5.1.61</ecNumber>
    </recommendedName>
    <alternativeName>
        <fullName evidence="1">Hydroxymethylbilane synthase</fullName>
        <shortName evidence="1">HMBS</shortName>
    </alternativeName>
    <alternativeName>
        <fullName evidence="1">Pre-uroporphyrinogen synthase</fullName>
    </alternativeName>
</protein>
<proteinExistence type="inferred from homology"/>
<dbReference type="EC" id="2.5.1.61" evidence="1"/>
<dbReference type="EMBL" id="CP000305">
    <property type="protein sequence ID" value="ABG16447.1"/>
    <property type="molecule type" value="Genomic_DNA"/>
</dbReference>
<dbReference type="EMBL" id="ACNQ01000001">
    <property type="protein sequence ID" value="EEO78555.1"/>
    <property type="molecule type" value="Genomic_DNA"/>
</dbReference>
<dbReference type="RefSeq" id="WP_002211465.1">
    <property type="nucleotide sequence ID" value="NZ_ACNQ01000001.1"/>
</dbReference>
<dbReference type="SMR" id="Q1CNI3"/>
<dbReference type="GeneID" id="57974860"/>
<dbReference type="KEGG" id="ypn:YPN_0114"/>
<dbReference type="HOGENOM" id="CLU_019704_0_2_6"/>
<dbReference type="UniPathway" id="UPA00251">
    <property type="reaction ID" value="UER00319"/>
</dbReference>
<dbReference type="Proteomes" id="UP000008936">
    <property type="component" value="Chromosome"/>
</dbReference>
<dbReference type="GO" id="GO:0005737">
    <property type="term" value="C:cytoplasm"/>
    <property type="evidence" value="ECO:0007669"/>
    <property type="project" value="TreeGrafter"/>
</dbReference>
<dbReference type="GO" id="GO:0004418">
    <property type="term" value="F:hydroxymethylbilane synthase activity"/>
    <property type="evidence" value="ECO:0007669"/>
    <property type="project" value="UniProtKB-UniRule"/>
</dbReference>
<dbReference type="GO" id="GO:0006782">
    <property type="term" value="P:protoporphyrinogen IX biosynthetic process"/>
    <property type="evidence" value="ECO:0007669"/>
    <property type="project" value="UniProtKB-UniRule"/>
</dbReference>
<dbReference type="CDD" id="cd13646">
    <property type="entry name" value="PBP2_EcHMBS_like"/>
    <property type="match status" value="1"/>
</dbReference>
<dbReference type="FunFam" id="3.30.160.40:FF:000002">
    <property type="entry name" value="Porphobilinogen deaminase"/>
    <property type="match status" value="1"/>
</dbReference>
<dbReference type="FunFam" id="3.40.190.10:FF:000004">
    <property type="entry name" value="Porphobilinogen deaminase"/>
    <property type="match status" value="1"/>
</dbReference>
<dbReference type="FunFam" id="3.40.190.10:FF:000005">
    <property type="entry name" value="Porphobilinogen deaminase"/>
    <property type="match status" value="1"/>
</dbReference>
<dbReference type="Gene3D" id="3.40.190.10">
    <property type="entry name" value="Periplasmic binding protein-like II"/>
    <property type="match status" value="2"/>
</dbReference>
<dbReference type="Gene3D" id="3.30.160.40">
    <property type="entry name" value="Porphobilinogen deaminase, C-terminal domain"/>
    <property type="match status" value="1"/>
</dbReference>
<dbReference type="HAMAP" id="MF_00260">
    <property type="entry name" value="Porphobil_deam"/>
    <property type="match status" value="1"/>
</dbReference>
<dbReference type="InterPro" id="IPR000860">
    <property type="entry name" value="HemC"/>
</dbReference>
<dbReference type="InterPro" id="IPR022419">
    <property type="entry name" value="Porphobilin_deaminase_cofac_BS"/>
</dbReference>
<dbReference type="InterPro" id="IPR022417">
    <property type="entry name" value="Porphobilin_deaminase_N"/>
</dbReference>
<dbReference type="InterPro" id="IPR022418">
    <property type="entry name" value="Porphobilinogen_deaminase_C"/>
</dbReference>
<dbReference type="InterPro" id="IPR036803">
    <property type="entry name" value="Porphobilinogen_deaminase_C_sf"/>
</dbReference>
<dbReference type="NCBIfam" id="TIGR00212">
    <property type="entry name" value="hemC"/>
    <property type="match status" value="1"/>
</dbReference>
<dbReference type="PANTHER" id="PTHR11557">
    <property type="entry name" value="PORPHOBILINOGEN DEAMINASE"/>
    <property type="match status" value="1"/>
</dbReference>
<dbReference type="PANTHER" id="PTHR11557:SF0">
    <property type="entry name" value="PORPHOBILINOGEN DEAMINASE"/>
    <property type="match status" value="1"/>
</dbReference>
<dbReference type="Pfam" id="PF01379">
    <property type="entry name" value="Porphobil_deam"/>
    <property type="match status" value="1"/>
</dbReference>
<dbReference type="Pfam" id="PF03900">
    <property type="entry name" value="Porphobil_deamC"/>
    <property type="match status" value="1"/>
</dbReference>
<dbReference type="PIRSF" id="PIRSF001438">
    <property type="entry name" value="4pyrrol_synth_OHMeBilane_synth"/>
    <property type="match status" value="1"/>
</dbReference>
<dbReference type="PRINTS" id="PR00151">
    <property type="entry name" value="PORPHBDMNASE"/>
</dbReference>
<dbReference type="SUPFAM" id="SSF53850">
    <property type="entry name" value="Periplasmic binding protein-like II"/>
    <property type="match status" value="1"/>
</dbReference>
<dbReference type="SUPFAM" id="SSF54782">
    <property type="entry name" value="Porphobilinogen deaminase (hydroxymethylbilane synthase), C-terminal domain"/>
    <property type="match status" value="1"/>
</dbReference>
<dbReference type="PROSITE" id="PS00533">
    <property type="entry name" value="PORPHOBILINOGEN_DEAM"/>
    <property type="match status" value="1"/>
</dbReference>
<feature type="chain" id="PRO_0000304298" description="Porphobilinogen deaminase">
    <location>
        <begin position="1"/>
        <end position="313"/>
    </location>
</feature>
<feature type="modified residue" description="S-(dipyrrolylmethanemethyl)cysteine" evidence="1">
    <location>
        <position position="242"/>
    </location>
</feature>
<reference key="1">
    <citation type="journal article" date="2006" name="J. Bacteriol.">
        <title>Complete genome sequence of Yersinia pestis strains Antiqua and Nepal516: evidence of gene reduction in an emerging pathogen.</title>
        <authorList>
            <person name="Chain P.S.G."/>
            <person name="Hu P."/>
            <person name="Malfatti S.A."/>
            <person name="Radnedge L."/>
            <person name="Larimer F."/>
            <person name="Vergez L.M."/>
            <person name="Worsham P."/>
            <person name="Chu M.C."/>
            <person name="Andersen G.L."/>
        </authorList>
    </citation>
    <scope>NUCLEOTIDE SEQUENCE [LARGE SCALE GENOMIC DNA]</scope>
    <source>
        <strain>Nepal516</strain>
    </source>
</reference>
<reference key="2">
    <citation type="submission" date="2009-04" db="EMBL/GenBank/DDBJ databases">
        <title>Yersinia pestis Nepal516A whole genome shotgun sequencing project.</title>
        <authorList>
            <person name="Plunkett G. III"/>
            <person name="Anderson B.D."/>
            <person name="Baumler D.J."/>
            <person name="Burland V."/>
            <person name="Cabot E.L."/>
            <person name="Glasner J.D."/>
            <person name="Mau B."/>
            <person name="Neeno-Eckwall E."/>
            <person name="Perna N.T."/>
            <person name="Munk A.C."/>
            <person name="Tapia R."/>
            <person name="Green L.D."/>
            <person name="Rogers Y.C."/>
            <person name="Detter J.C."/>
            <person name="Bruce D.C."/>
            <person name="Brettin T.S."/>
        </authorList>
    </citation>
    <scope>NUCLEOTIDE SEQUENCE [LARGE SCALE GENOMIC DNA]</scope>
    <source>
        <strain>Nepal516</strain>
    </source>
</reference>
<accession>Q1CNI3</accession>
<accession>D1Q101</accession>
<gene>
    <name evidence="1" type="primary">hemC</name>
    <name type="ordered locus">YPN_0114</name>
    <name type="ORF">YP516_0073</name>
</gene>
<sequence>MLDKIIRIATRQSPLALWQAHYVQHLLQANHPGLQIELVPMVTRGDIILDTPLAKVGGKGLFVKELELALLDGRADIAVHSMKDVPIAFPEGLGLVTICEREDPRDAFVSSHYAHLDDLPAGSVVGTSSLRRQCQLRERRPDLIIRDLRGNVGTRLAKLDNGDYQAIILAVAGLKRLGLENRIRYAMSAEESLPAVGQGAVGIECRLDDDHTRQLLAPLNHRHTELRVCAERAMNIRLEGGCQVPIGSYAELEGDTLWLRALVGAPDGSQMIRGERRGPAAEAEQMGIELADELLSRGAREILAAVYLDNPAR</sequence>
<name>HEM3_YERPN</name>
<keyword id="KW-0627">Porphyrin biosynthesis</keyword>
<keyword id="KW-0808">Transferase</keyword>
<evidence type="ECO:0000255" key="1">
    <source>
        <dbReference type="HAMAP-Rule" id="MF_00260"/>
    </source>
</evidence>
<comment type="function">
    <text evidence="1">Tetrapolymerization of the monopyrrole PBG into the hydroxymethylbilane pre-uroporphyrinogen in several discrete steps.</text>
</comment>
<comment type="catalytic activity">
    <reaction evidence="1">
        <text>4 porphobilinogen + H2O = hydroxymethylbilane + 4 NH4(+)</text>
        <dbReference type="Rhea" id="RHEA:13185"/>
        <dbReference type="ChEBI" id="CHEBI:15377"/>
        <dbReference type="ChEBI" id="CHEBI:28938"/>
        <dbReference type="ChEBI" id="CHEBI:57845"/>
        <dbReference type="ChEBI" id="CHEBI:58126"/>
        <dbReference type="EC" id="2.5.1.61"/>
    </reaction>
</comment>
<comment type="cofactor">
    <cofactor evidence="1">
        <name>dipyrromethane</name>
        <dbReference type="ChEBI" id="CHEBI:60342"/>
    </cofactor>
    <text evidence="1">Binds 1 dipyrromethane group covalently.</text>
</comment>
<comment type="pathway">
    <text evidence="1">Porphyrin-containing compound metabolism; protoporphyrin-IX biosynthesis; coproporphyrinogen-III from 5-aminolevulinate: step 2/4.</text>
</comment>
<comment type="subunit">
    <text evidence="1">Monomer.</text>
</comment>
<comment type="miscellaneous">
    <text evidence="1">The porphobilinogen subunits are added to the dipyrromethane group.</text>
</comment>
<comment type="similarity">
    <text evidence="1">Belongs to the HMBS family.</text>
</comment>
<organism>
    <name type="scientific">Yersinia pestis bv. Antiqua (strain Nepal516)</name>
    <dbReference type="NCBI Taxonomy" id="377628"/>
    <lineage>
        <taxon>Bacteria</taxon>
        <taxon>Pseudomonadati</taxon>
        <taxon>Pseudomonadota</taxon>
        <taxon>Gammaproteobacteria</taxon>
        <taxon>Enterobacterales</taxon>
        <taxon>Yersiniaceae</taxon>
        <taxon>Yersinia</taxon>
    </lineage>
</organism>